<name>US441_GAHVG</name>
<protein>
    <recommendedName>
        <fullName>Uncharacterized 16.7 kDa protein</fullName>
    </recommendedName>
</protein>
<reference key="1">
    <citation type="journal article" date="1992" name="Virus Genes">
        <title>Sequence determination and genetic content of an 8.9-kb restriction fragment in the short unique region and the internal inverted repeat of Marek's disease virus type 1 DNA.</title>
        <authorList>
            <person name="Sakaguchi M."/>
            <person name="Urakawa T."/>
            <person name="Hirayama Y."/>
            <person name="Miki N."/>
            <person name="Yamamoto M."/>
            <person name="Hirai K."/>
        </authorList>
    </citation>
    <scope>NUCLEOTIDE SEQUENCE [GENOMIC DNA]</scope>
</reference>
<reference key="2">
    <citation type="journal article" date="1995" name="Virology">
        <title>The Marek's disease virus (MDV) unique short region: alphaherpesvirus-homologous, fowlpox virus-homologous, and MDV-specific genes.</title>
        <authorList>
            <person name="Brunovskis P."/>
            <person name="Velicer L.F."/>
        </authorList>
    </citation>
    <scope>NUCLEOTIDE SEQUENCE [GENOMIC DNA]</scope>
</reference>
<organism>
    <name type="scientific">Gallid herpesvirus 2 (strain GA)</name>
    <name type="common">GaHV-2</name>
    <name type="synonym">Marek's disease herpesvirus type 1</name>
    <dbReference type="NCBI Taxonomy" id="10388"/>
    <lineage>
        <taxon>Viruses</taxon>
        <taxon>Duplodnaviria</taxon>
        <taxon>Heunggongvirae</taxon>
        <taxon>Peploviricota</taxon>
        <taxon>Herviviricetes</taxon>
        <taxon>Herpesvirales</taxon>
        <taxon>Orthoherpesviridae</taxon>
        <taxon>Alphaherpesvirinae</taxon>
        <taxon>Mardivirus</taxon>
        <taxon>Mardivirus gallidalpha2</taxon>
        <taxon>Gallid alphaherpesvirus 2</taxon>
    </lineage>
</organism>
<gene>
    <name type="primary">US441</name>
</gene>
<feature type="chain" id="PRO_0000116353" description="Uncharacterized 16.7 kDa protein">
    <location>
        <begin position="1"/>
        <end position="147"/>
    </location>
</feature>
<feature type="region of interest" description="Disordered" evidence="1">
    <location>
        <begin position="51"/>
        <end position="72"/>
    </location>
</feature>
<accession>Q05105</accession>
<dbReference type="EMBL" id="M80595">
    <property type="protein sequence ID" value="AAB59896.1"/>
    <property type="molecule type" value="Genomic_DNA"/>
</dbReference>
<dbReference type="EMBL" id="L22174">
    <property type="protein sequence ID" value="AAA64966.1"/>
    <property type="molecule type" value="Genomic_DNA"/>
</dbReference>
<sequence length="147" mass="16776">MAPSGPTPYSHRPQIKHYGTFSDCMRYTLNDESKVDDRCSDIHNSLAQSNVTSSMSVMNDSEECPLINGPSMQAEDPKSVFYKVRKPDRSRDFSWQNLNSHGNSGLRREKYIRSSKRRWKNPEIFKVSLKCESIGAGNGIKISFSFF</sequence>
<organismHost>
    <name type="scientific">Gallus gallus</name>
    <name type="common">Chicken</name>
    <dbReference type="NCBI Taxonomy" id="9031"/>
</organismHost>
<evidence type="ECO:0000256" key="1">
    <source>
        <dbReference type="SAM" id="MobiDB-lite"/>
    </source>
</evidence>
<proteinExistence type="predicted"/>